<comment type="function">
    <text evidence="1">Catalyzes the conversion of 4-hydroxy-tetrahydrodipicolinate (HTPA) to tetrahydrodipicolinate.</text>
</comment>
<comment type="catalytic activity">
    <reaction evidence="1">
        <text>(S)-2,3,4,5-tetrahydrodipicolinate + NAD(+) + H2O = (2S,4S)-4-hydroxy-2,3,4,5-tetrahydrodipicolinate + NADH + H(+)</text>
        <dbReference type="Rhea" id="RHEA:35323"/>
        <dbReference type="ChEBI" id="CHEBI:15377"/>
        <dbReference type="ChEBI" id="CHEBI:15378"/>
        <dbReference type="ChEBI" id="CHEBI:16845"/>
        <dbReference type="ChEBI" id="CHEBI:57540"/>
        <dbReference type="ChEBI" id="CHEBI:57945"/>
        <dbReference type="ChEBI" id="CHEBI:67139"/>
        <dbReference type="EC" id="1.17.1.8"/>
    </reaction>
</comment>
<comment type="catalytic activity">
    <reaction evidence="1">
        <text>(S)-2,3,4,5-tetrahydrodipicolinate + NADP(+) + H2O = (2S,4S)-4-hydroxy-2,3,4,5-tetrahydrodipicolinate + NADPH + H(+)</text>
        <dbReference type="Rhea" id="RHEA:35331"/>
        <dbReference type="ChEBI" id="CHEBI:15377"/>
        <dbReference type="ChEBI" id="CHEBI:15378"/>
        <dbReference type="ChEBI" id="CHEBI:16845"/>
        <dbReference type="ChEBI" id="CHEBI:57783"/>
        <dbReference type="ChEBI" id="CHEBI:58349"/>
        <dbReference type="ChEBI" id="CHEBI:67139"/>
        <dbReference type="EC" id="1.17.1.8"/>
    </reaction>
</comment>
<comment type="pathway">
    <text evidence="1">Amino-acid biosynthesis; L-lysine biosynthesis via DAP pathway; (S)-tetrahydrodipicolinate from L-aspartate: step 4/4.</text>
</comment>
<comment type="subcellular location">
    <subcellularLocation>
        <location evidence="1">Cytoplasm</location>
    </subcellularLocation>
</comment>
<comment type="similarity">
    <text evidence="1">Belongs to the DapB family.</text>
</comment>
<comment type="caution">
    <text evidence="2">Was originally thought to be a dihydrodipicolinate reductase (DHDPR), catalyzing the conversion of dihydrodipicolinate to tetrahydrodipicolinate. However, it was shown in E.coli that the substrate of the enzymatic reaction is not dihydrodipicolinate (DHDP) but in fact (2S,4S)-4-hydroxy-2,3,4,5-tetrahydrodipicolinic acid (HTPA), the product released by the DapA-catalyzed reaction.</text>
</comment>
<gene>
    <name evidence="1" type="primary">dapB</name>
    <name type="ordered locus">OCAR_4422</name>
    <name type="ordered locus">OCA5_c01090</name>
</gene>
<accession>B6JCI8</accession>
<accession>F8BRD7</accession>
<sequence>MSDMRLIVAGAGGRMGRTLIHALHEADGAALVGALEAPGSELLGQDSGLLAGLGPNGIPVSADLWSLSKDADGIIDFTVPAATIANVAIAAERGIVHVIGTTGLSASDNAVIKSVTSRAIVVQSGNMSLGVNLLAALVKQVAKSLDEDFDIEILEMHHRAKIDAPSGTAYLLGQAAADGRGVPLEEKSVRSRDGFTGARGRGDIGFATLRGGTVTGEHSVIFAGPYERIELTHRAEDRMIFARGAVKAACWARGRKPGLYSMADVLGLGSQS</sequence>
<name>DAPB_AFIC5</name>
<protein>
    <recommendedName>
        <fullName evidence="1">4-hydroxy-tetrahydrodipicolinate reductase</fullName>
        <shortName evidence="1">HTPA reductase</shortName>
        <ecNumber evidence="1">1.17.1.8</ecNumber>
    </recommendedName>
</protein>
<keyword id="KW-0028">Amino-acid biosynthesis</keyword>
<keyword id="KW-0963">Cytoplasm</keyword>
<keyword id="KW-0220">Diaminopimelate biosynthesis</keyword>
<keyword id="KW-0457">Lysine biosynthesis</keyword>
<keyword id="KW-0520">NAD</keyword>
<keyword id="KW-0521">NADP</keyword>
<keyword id="KW-0560">Oxidoreductase</keyword>
<keyword id="KW-1185">Reference proteome</keyword>
<evidence type="ECO:0000255" key="1">
    <source>
        <dbReference type="HAMAP-Rule" id="MF_00102"/>
    </source>
</evidence>
<evidence type="ECO:0000305" key="2"/>
<dbReference type="EC" id="1.17.1.8" evidence="1"/>
<dbReference type="EMBL" id="CP001196">
    <property type="protein sequence ID" value="ACI91568.1"/>
    <property type="molecule type" value="Genomic_DNA"/>
</dbReference>
<dbReference type="EMBL" id="CP002826">
    <property type="protein sequence ID" value="AEI04841.1"/>
    <property type="molecule type" value="Genomic_DNA"/>
</dbReference>
<dbReference type="RefSeq" id="WP_012561599.1">
    <property type="nucleotide sequence ID" value="NC_015684.1"/>
</dbReference>
<dbReference type="SMR" id="B6JCI8"/>
<dbReference type="STRING" id="504832.OCA5_c01090"/>
<dbReference type="KEGG" id="oca:OCAR_4422"/>
<dbReference type="KEGG" id="ocg:OCA5_c01090"/>
<dbReference type="PATRIC" id="fig|504832.7.peg.115"/>
<dbReference type="eggNOG" id="COG0289">
    <property type="taxonomic scope" value="Bacteria"/>
</dbReference>
<dbReference type="HOGENOM" id="CLU_047479_2_1_5"/>
<dbReference type="OrthoDB" id="9790352at2"/>
<dbReference type="UniPathway" id="UPA00034">
    <property type="reaction ID" value="UER00018"/>
</dbReference>
<dbReference type="Proteomes" id="UP000007730">
    <property type="component" value="Chromosome"/>
</dbReference>
<dbReference type="GO" id="GO:0005829">
    <property type="term" value="C:cytosol"/>
    <property type="evidence" value="ECO:0007669"/>
    <property type="project" value="TreeGrafter"/>
</dbReference>
<dbReference type="GO" id="GO:0008839">
    <property type="term" value="F:4-hydroxy-tetrahydrodipicolinate reductase"/>
    <property type="evidence" value="ECO:0007669"/>
    <property type="project" value="UniProtKB-EC"/>
</dbReference>
<dbReference type="GO" id="GO:0051287">
    <property type="term" value="F:NAD binding"/>
    <property type="evidence" value="ECO:0007669"/>
    <property type="project" value="UniProtKB-UniRule"/>
</dbReference>
<dbReference type="GO" id="GO:0050661">
    <property type="term" value="F:NADP binding"/>
    <property type="evidence" value="ECO:0007669"/>
    <property type="project" value="UniProtKB-UniRule"/>
</dbReference>
<dbReference type="GO" id="GO:0016726">
    <property type="term" value="F:oxidoreductase activity, acting on CH or CH2 groups, NAD or NADP as acceptor"/>
    <property type="evidence" value="ECO:0007669"/>
    <property type="project" value="UniProtKB-UniRule"/>
</dbReference>
<dbReference type="GO" id="GO:0019877">
    <property type="term" value="P:diaminopimelate biosynthetic process"/>
    <property type="evidence" value="ECO:0007669"/>
    <property type="project" value="UniProtKB-UniRule"/>
</dbReference>
<dbReference type="GO" id="GO:0009089">
    <property type="term" value="P:lysine biosynthetic process via diaminopimelate"/>
    <property type="evidence" value="ECO:0007669"/>
    <property type="project" value="UniProtKB-UniRule"/>
</dbReference>
<dbReference type="CDD" id="cd02274">
    <property type="entry name" value="DHDPR_N"/>
    <property type="match status" value="1"/>
</dbReference>
<dbReference type="FunFam" id="3.30.360.10:FF:000004">
    <property type="entry name" value="4-hydroxy-tetrahydrodipicolinate reductase"/>
    <property type="match status" value="1"/>
</dbReference>
<dbReference type="Gene3D" id="3.30.360.10">
    <property type="entry name" value="Dihydrodipicolinate Reductase, domain 2"/>
    <property type="match status" value="1"/>
</dbReference>
<dbReference type="Gene3D" id="3.40.50.720">
    <property type="entry name" value="NAD(P)-binding Rossmann-like Domain"/>
    <property type="match status" value="1"/>
</dbReference>
<dbReference type="HAMAP" id="MF_00102">
    <property type="entry name" value="DapB"/>
    <property type="match status" value="1"/>
</dbReference>
<dbReference type="InterPro" id="IPR022663">
    <property type="entry name" value="DapB_C"/>
</dbReference>
<dbReference type="InterPro" id="IPR000846">
    <property type="entry name" value="DapB_N"/>
</dbReference>
<dbReference type="InterPro" id="IPR022664">
    <property type="entry name" value="DapB_N_CS"/>
</dbReference>
<dbReference type="InterPro" id="IPR023940">
    <property type="entry name" value="DHDPR_bac"/>
</dbReference>
<dbReference type="InterPro" id="IPR036291">
    <property type="entry name" value="NAD(P)-bd_dom_sf"/>
</dbReference>
<dbReference type="NCBIfam" id="TIGR00036">
    <property type="entry name" value="dapB"/>
    <property type="match status" value="1"/>
</dbReference>
<dbReference type="PANTHER" id="PTHR20836:SF0">
    <property type="entry name" value="4-HYDROXY-TETRAHYDRODIPICOLINATE REDUCTASE 1, CHLOROPLASTIC-RELATED"/>
    <property type="match status" value="1"/>
</dbReference>
<dbReference type="PANTHER" id="PTHR20836">
    <property type="entry name" value="DIHYDRODIPICOLINATE REDUCTASE"/>
    <property type="match status" value="1"/>
</dbReference>
<dbReference type="Pfam" id="PF05173">
    <property type="entry name" value="DapB_C"/>
    <property type="match status" value="1"/>
</dbReference>
<dbReference type="Pfam" id="PF01113">
    <property type="entry name" value="DapB_N"/>
    <property type="match status" value="1"/>
</dbReference>
<dbReference type="PIRSF" id="PIRSF000161">
    <property type="entry name" value="DHPR"/>
    <property type="match status" value="1"/>
</dbReference>
<dbReference type="SUPFAM" id="SSF55347">
    <property type="entry name" value="Glyceraldehyde-3-phosphate dehydrogenase-like, C-terminal domain"/>
    <property type="match status" value="1"/>
</dbReference>
<dbReference type="SUPFAM" id="SSF51735">
    <property type="entry name" value="NAD(P)-binding Rossmann-fold domains"/>
    <property type="match status" value="1"/>
</dbReference>
<dbReference type="PROSITE" id="PS01298">
    <property type="entry name" value="DAPB"/>
    <property type="match status" value="1"/>
</dbReference>
<reference key="1">
    <citation type="journal article" date="2008" name="J. Bacteriol.">
        <title>Genome sequence of the chemolithoautotrophic bacterium Oligotropha carboxidovorans OM5T.</title>
        <authorList>
            <person name="Paul D."/>
            <person name="Bridges S."/>
            <person name="Burgess S.C."/>
            <person name="Dandass Y."/>
            <person name="Lawrence M.L."/>
        </authorList>
    </citation>
    <scope>NUCLEOTIDE SEQUENCE [LARGE SCALE GENOMIC DNA]</scope>
    <source>
        <strain>ATCC 49405 / DSM 1227 / KCTC 32145 / OM5</strain>
    </source>
</reference>
<reference key="2">
    <citation type="journal article" date="2011" name="J. Bacteriol.">
        <title>Complete genome sequences of the chemolithoautotrophic Oligotropha carboxidovorans strains OM4 and OM5.</title>
        <authorList>
            <person name="Volland S."/>
            <person name="Rachinger M."/>
            <person name="Strittmatter A."/>
            <person name="Daniel R."/>
            <person name="Gottschalk G."/>
            <person name="Meyer O."/>
        </authorList>
    </citation>
    <scope>NUCLEOTIDE SEQUENCE [LARGE SCALE GENOMIC DNA]</scope>
    <source>
        <strain>ATCC 49405 / DSM 1227 / KCTC 32145 / OM5</strain>
    </source>
</reference>
<organism>
    <name type="scientific">Afipia carboxidovorans (strain ATCC 49405 / DSM 1227 / KCTC 32145 / OM5)</name>
    <name type="common">Oligotropha carboxidovorans</name>
    <dbReference type="NCBI Taxonomy" id="504832"/>
    <lineage>
        <taxon>Bacteria</taxon>
        <taxon>Pseudomonadati</taxon>
        <taxon>Pseudomonadota</taxon>
        <taxon>Alphaproteobacteria</taxon>
        <taxon>Hyphomicrobiales</taxon>
        <taxon>Nitrobacteraceae</taxon>
        <taxon>Afipia</taxon>
    </lineage>
</organism>
<proteinExistence type="inferred from homology"/>
<feature type="chain" id="PRO_1000093984" description="4-hydroxy-tetrahydrodipicolinate reductase">
    <location>
        <begin position="1"/>
        <end position="272"/>
    </location>
</feature>
<feature type="active site" description="Proton donor/acceptor" evidence="1">
    <location>
        <position position="157"/>
    </location>
</feature>
<feature type="active site" description="Proton donor" evidence="1">
    <location>
        <position position="161"/>
    </location>
</feature>
<feature type="binding site" evidence="1">
    <location>
        <begin position="10"/>
        <end position="15"/>
    </location>
    <ligand>
        <name>NAD(+)</name>
        <dbReference type="ChEBI" id="CHEBI:57540"/>
    </ligand>
</feature>
<feature type="binding site" evidence="1">
    <location>
        <position position="36"/>
    </location>
    <ligand>
        <name>NAD(+)</name>
        <dbReference type="ChEBI" id="CHEBI:57540"/>
    </ligand>
</feature>
<feature type="binding site" evidence="1">
    <location>
        <begin position="100"/>
        <end position="102"/>
    </location>
    <ligand>
        <name>NAD(+)</name>
        <dbReference type="ChEBI" id="CHEBI:57540"/>
    </ligand>
</feature>
<feature type="binding site" evidence="1">
    <location>
        <begin position="124"/>
        <end position="127"/>
    </location>
    <ligand>
        <name>NAD(+)</name>
        <dbReference type="ChEBI" id="CHEBI:57540"/>
    </ligand>
</feature>
<feature type="binding site" evidence="1">
    <location>
        <position position="158"/>
    </location>
    <ligand>
        <name>(S)-2,3,4,5-tetrahydrodipicolinate</name>
        <dbReference type="ChEBI" id="CHEBI:16845"/>
    </ligand>
</feature>
<feature type="binding site" evidence="1">
    <location>
        <begin position="167"/>
        <end position="168"/>
    </location>
    <ligand>
        <name>(S)-2,3,4,5-tetrahydrodipicolinate</name>
        <dbReference type="ChEBI" id="CHEBI:16845"/>
    </ligand>
</feature>